<feature type="chain" id="PRO_0000178174" description="dITP/XTP pyrophosphatase">
    <location>
        <begin position="1"/>
        <end position="195"/>
    </location>
</feature>
<feature type="active site" description="Proton acceptor" evidence="1">
    <location>
        <position position="70"/>
    </location>
</feature>
<feature type="binding site" evidence="1">
    <location>
        <begin position="9"/>
        <end position="14"/>
    </location>
    <ligand>
        <name>substrate</name>
    </ligand>
</feature>
<feature type="binding site" evidence="1">
    <location>
        <position position="41"/>
    </location>
    <ligand>
        <name>Mg(2+)</name>
        <dbReference type="ChEBI" id="CHEBI:18420"/>
    </ligand>
</feature>
<feature type="binding site" evidence="1">
    <location>
        <position position="70"/>
    </location>
    <ligand>
        <name>Mg(2+)</name>
        <dbReference type="ChEBI" id="CHEBI:18420"/>
    </ligand>
</feature>
<feature type="binding site" evidence="1">
    <location>
        <position position="71"/>
    </location>
    <ligand>
        <name>substrate</name>
    </ligand>
</feature>
<feature type="binding site" evidence="1">
    <location>
        <begin position="155"/>
        <end position="158"/>
    </location>
    <ligand>
        <name>substrate</name>
    </ligand>
</feature>
<feature type="binding site" evidence="1">
    <location>
        <position position="178"/>
    </location>
    <ligand>
        <name>substrate</name>
    </ligand>
</feature>
<feature type="binding site" evidence="1">
    <location>
        <begin position="183"/>
        <end position="184"/>
    </location>
    <ligand>
        <name>substrate</name>
    </ligand>
</feature>
<name>IXTPA_HAEIN</name>
<organism>
    <name type="scientific">Haemophilus influenzae (strain ATCC 51907 / DSM 11121 / KW20 / Rd)</name>
    <dbReference type="NCBI Taxonomy" id="71421"/>
    <lineage>
        <taxon>Bacteria</taxon>
        <taxon>Pseudomonadati</taxon>
        <taxon>Pseudomonadota</taxon>
        <taxon>Gammaproteobacteria</taxon>
        <taxon>Pasteurellales</taxon>
        <taxon>Pasteurellaceae</taxon>
        <taxon>Haemophilus</taxon>
    </lineage>
</organism>
<evidence type="ECO:0000255" key="1">
    <source>
        <dbReference type="HAMAP-Rule" id="MF_01405"/>
    </source>
</evidence>
<keyword id="KW-0378">Hydrolase</keyword>
<keyword id="KW-0460">Magnesium</keyword>
<keyword id="KW-0479">Metal-binding</keyword>
<keyword id="KW-0546">Nucleotide metabolism</keyword>
<keyword id="KW-0547">Nucleotide-binding</keyword>
<keyword id="KW-1185">Reference proteome</keyword>
<proteinExistence type="evidence at protein level"/>
<dbReference type="EC" id="3.6.1.66" evidence="1"/>
<dbReference type="EMBL" id="L42023">
    <property type="protein sequence ID" value="AAC21925.1"/>
    <property type="molecule type" value="Genomic_DNA"/>
</dbReference>
<dbReference type="PIR" id="D64146">
    <property type="entry name" value="D64146"/>
</dbReference>
<dbReference type="RefSeq" id="NP_438428.1">
    <property type="nucleotide sequence ID" value="NC_000907.1"/>
</dbReference>
<dbReference type="SMR" id="P44598"/>
<dbReference type="STRING" id="71421.HI_0260"/>
<dbReference type="EnsemblBacteria" id="AAC21925">
    <property type="protein sequence ID" value="AAC21925"/>
    <property type="gene ID" value="HI_0260"/>
</dbReference>
<dbReference type="KEGG" id="hin:HI_0260"/>
<dbReference type="PATRIC" id="fig|71421.8.peg.274"/>
<dbReference type="eggNOG" id="COG0127">
    <property type="taxonomic scope" value="Bacteria"/>
</dbReference>
<dbReference type="HOGENOM" id="CLU_082080_0_3_6"/>
<dbReference type="OrthoDB" id="9807456at2"/>
<dbReference type="PhylomeDB" id="P44598"/>
<dbReference type="BioCyc" id="HINF71421:G1GJ1-274-MONOMER"/>
<dbReference type="Proteomes" id="UP000000579">
    <property type="component" value="Chromosome"/>
</dbReference>
<dbReference type="GO" id="GO:0005737">
    <property type="term" value="C:cytoplasm"/>
    <property type="evidence" value="ECO:0000318"/>
    <property type="project" value="GO_Central"/>
</dbReference>
<dbReference type="GO" id="GO:0005829">
    <property type="term" value="C:cytosol"/>
    <property type="evidence" value="ECO:0000318"/>
    <property type="project" value="GO_Central"/>
</dbReference>
<dbReference type="GO" id="GO:0035870">
    <property type="term" value="F:dITP diphosphatase activity"/>
    <property type="evidence" value="ECO:0007669"/>
    <property type="project" value="RHEA"/>
</dbReference>
<dbReference type="GO" id="GO:0036220">
    <property type="term" value="F:ITP diphosphatase activity"/>
    <property type="evidence" value="ECO:0007669"/>
    <property type="project" value="UniProtKB-EC"/>
</dbReference>
<dbReference type="GO" id="GO:0046872">
    <property type="term" value="F:metal ion binding"/>
    <property type="evidence" value="ECO:0007669"/>
    <property type="project" value="UniProtKB-KW"/>
</dbReference>
<dbReference type="GO" id="GO:0047429">
    <property type="term" value="F:nucleoside triphosphate diphosphatase activity"/>
    <property type="evidence" value="ECO:0000318"/>
    <property type="project" value="GO_Central"/>
</dbReference>
<dbReference type="GO" id="GO:0000166">
    <property type="term" value="F:nucleotide binding"/>
    <property type="evidence" value="ECO:0007669"/>
    <property type="project" value="UniProtKB-KW"/>
</dbReference>
<dbReference type="GO" id="GO:0017111">
    <property type="term" value="F:ribonucleoside triphosphate phosphatase activity"/>
    <property type="evidence" value="ECO:0007669"/>
    <property type="project" value="InterPro"/>
</dbReference>
<dbReference type="GO" id="GO:0036222">
    <property type="term" value="F:XTP diphosphatase activity"/>
    <property type="evidence" value="ECO:0007669"/>
    <property type="project" value="RHEA"/>
</dbReference>
<dbReference type="GO" id="GO:0009143">
    <property type="term" value="P:nucleoside triphosphate catabolic process"/>
    <property type="evidence" value="ECO:0000318"/>
    <property type="project" value="GO_Central"/>
</dbReference>
<dbReference type="GO" id="GO:0009117">
    <property type="term" value="P:nucleotide metabolic process"/>
    <property type="evidence" value="ECO:0007669"/>
    <property type="project" value="UniProtKB-KW"/>
</dbReference>
<dbReference type="GO" id="GO:0009146">
    <property type="term" value="P:purine nucleoside triphosphate catabolic process"/>
    <property type="evidence" value="ECO:0007669"/>
    <property type="project" value="UniProtKB-UniRule"/>
</dbReference>
<dbReference type="CDD" id="cd00515">
    <property type="entry name" value="HAM1"/>
    <property type="match status" value="1"/>
</dbReference>
<dbReference type="FunFam" id="3.90.950.10:FF:000001">
    <property type="entry name" value="dITP/XTP pyrophosphatase"/>
    <property type="match status" value="1"/>
</dbReference>
<dbReference type="Gene3D" id="3.90.950.10">
    <property type="match status" value="1"/>
</dbReference>
<dbReference type="HAMAP" id="MF_01405">
    <property type="entry name" value="Non_canon_purine_NTPase"/>
    <property type="match status" value="1"/>
</dbReference>
<dbReference type="InterPro" id="IPR020922">
    <property type="entry name" value="dITP/XTP_pyrophosphatase"/>
</dbReference>
<dbReference type="InterPro" id="IPR029001">
    <property type="entry name" value="ITPase-like_fam"/>
</dbReference>
<dbReference type="InterPro" id="IPR002637">
    <property type="entry name" value="RdgB/HAM1"/>
</dbReference>
<dbReference type="NCBIfam" id="TIGR00042">
    <property type="entry name" value="RdgB/HAM1 family non-canonical purine NTP pyrophosphatase"/>
    <property type="match status" value="1"/>
</dbReference>
<dbReference type="PANTHER" id="PTHR11067:SF9">
    <property type="entry name" value="INOSINE TRIPHOSPHATE PYROPHOSPHATASE"/>
    <property type="match status" value="1"/>
</dbReference>
<dbReference type="PANTHER" id="PTHR11067">
    <property type="entry name" value="INOSINE TRIPHOSPHATE PYROPHOSPHATASE/HAM1 PROTEIN"/>
    <property type="match status" value="1"/>
</dbReference>
<dbReference type="Pfam" id="PF01725">
    <property type="entry name" value="Ham1p_like"/>
    <property type="match status" value="1"/>
</dbReference>
<dbReference type="SUPFAM" id="SSF52972">
    <property type="entry name" value="ITPase-like"/>
    <property type="match status" value="1"/>
</dbReference>
<protein>
    <recommendedName>
        <fullName evidence="1">dITP/XTP pyrophosphatase</fullName>
        <ecNumber evidence="1">3.6.1.66</ecNumber>
    </recommendedName>
    <alternativeName>
        <fullName evidence="1">Non-canonical purine NTP pyrophosphatase</fullName>
    </alternativeName>
    <alternativeName>
        <fullName evidence="1">Non-standard purine NTP pyrophosphatase</fullName>
    </alternativeName>
    <alternativeName>
        <fullName evidence="1">Nucleoside-triphosphate diphosphatase</fullName>
    </alternativeName>
    <alternativeName>
        <fullName evidence="1">Nucleoside-triphosphate pyrophosphatase</fullName>
        <shortName evidence="1">NTPase</shortName>
    </alternativeName>
</protein>
<reference key="1">
    <citation type="journal article" date="1995" name="Science">
        <title>Whole-genome random sequencing and assembly of Haemophilus influenzae Rd.</title>
        <authorList>
            <person name="Fleischmann R.D."/>
            <person name="Adams M.D."/>
            <person name="White O."/>
            <person name="Clayton R.A."/>
            <person name="Kirkness E.F."/>
            <person name="Kerlavage A.R."/>
            <person name="Bult C.J."/>
            <person name="Tomb J.-F."/>
            <person name="Dougherty B.A."/>
            <person name="Merrick J.M."/>
            <person name="McKenney K."/>
            <person name="Sutton G.G."/>
            <person name="FitzHugh W."/>
            <person name="Fields C.A."/>
            <person name="Gocayne J.D."/>
            <person name="Scott J.D."/>
            <person name="Shirley R."/>
            <person name="Liu L.-I."/>
            <person name="Glodek A."/>
            <person name="Kelley J.M."/>
            <person name="Weidman J.F."/>
            <person name="Phillips C.A."/>
            <person name="Spriggs T."/>
            <person name="Hedblom E."/>
            <person name="Cotton M.D."/>
            <person name="Utterback T.R."/>
            <person name="Hanna M.C."/>
            <person name="Nguyen D.T."/>
            <person name="Saudek D.M."/>
            <person name="Brandon R.C."/>
            <person name="Fine L.D."/>
            <person name="Fritchman J.L."/>
            <person name="Fuhrmann J.L."/>
            <person name="Geoghagen N.S.M."/>
            <person name="Gnehm C.L."/>
            <person name="McDonald L.A."/>
            <person name="Small K.V."/>
            <person name="Fraser C.M."/>
            <person name="Smith H.O."/>
            <person name="Venter J.C."/>
        </authorList>
    </citation>
    <scope>NUCLEOTIDE SEQUENCE [LARGE SCALE GENOMIC DNA]</scope>
    <source>
        <strain>ATCC 51907 / DSM 11121 / KW20 / Rd</strain>
    </source>
</reference>
<reference key="2">
    <citation type="journal article" date="2000" name="Electrophoresis">
        <title>Two-dimensional map of the proteome of Haemophilus influenzae.</title>
        <authorList>
            <person name="Langen H."/>
            <person name="Takacs B."/>
            <person name="Evers S."/>
            <person name="Berndt P."/>
            <person name="Lahm H.W."/>
            <person name="Wipf B."/>
            <person name="Gray C."/>
            <person name="Fountoulakis M."/>
        </authorList>
    </citation>
    <scope>IDENTIFICATION BY MASS SPECTROMETRY</scope>
    <source>
        <strain>ATCC 51907 / DSM 11121 / KW20 / Rd</strain>
    </source>
</reference>
<sequence length="195" mass="20972">MKQKIVLATGNKGKVKEMADVLSDFGFEVIAQTDLGIESPEETGLTFVENALLKARYASEKSGLPAIADDSGLVVSALNGAPGLYSARYAGEEGNDAKNREKLLAELAHIAQEQRQAKFVSCIVFLQHPTDPSPIIAEGECCGVIGFEEKGENGFGYDSLFFSPEQGCTFAELETAEKKKISHRAKALSVLKSKL</sequence>
<accession>P44598</accession>
<comment type="function">
    <text evidence="1">Pyrophosphatase that catalyzes the hydrolysis of nucleoside triphosphates to their monophosphate derivatives, with a high preference for the non-canonical purine nucleotides XTP (xanthosine triphosphate), dITP (deoxyinosine triphosphate) and ITP. Seems to function as a house-cleaning enzyme that removes non-canonical purine nucleotides from the nucleotide pool, thus preventing their incorporation into DNA/RNA and avoiding chromosomal lesions.</text>
</comment>
<comment type="catalytic activity">
    <reaction evidence="1">
        <text>XTP + H2O = XMP + diphosphate + H(+)</text>
        <dbReference type="Rhea" id="RHEA:28610"/>
        <dbReference type="ChEBI" id="CHEBI:15377"/>
        <dbReference type="ChEBI" id="CHEBI:15378"/>
        <dbReference type="ChEBI" id="CHEBI:33019"/>
        <dbReference type="ChEBI" id="CHEBI:57464"/>
        <dbReference type="ChEBI" id="CHEBI:61314"/>
        <dbReference type="EC" id="3.6.1.66"/>
    </reaction>
</comment>
<comment type="catalytic activity">
    <reaction evidence="1">
        <text>dITP + H2O = dIMP + diphosphate + H(+)</text>
        <dbReference type="Rhea" id="RHEA:28342"/>
        <dbReference type="ChEBI" id="CHEBI:15377"/>
        <dbReference type="ChEBI" id="CHEBI:15378"/>
        <dbReference type="ChEBI" id="CHEBI:33019"/>
        <dbReference type="ChEBI" id="CHEBI:61194"/>
        <dbReference type="ChEBI" id="CHEBI:61382"/>
        <dbReference type="EC" id="3.6.1.66"/>
    </reaction>
</comment>
<comment type="catalytic activity">
    <reaction evidence="1">
        <text>ITP + H2O = IMP + diphosphate + H(+)</text>
        <dbReference type="Rhea" id="RHEA:29399"/>
        <dbReference type="ChEBI" id="CHEBI:15377"/>
        <dbReference type="ChEBI" id="CHEBI:15378"/>
        <dbReference type="ChEBI" id="CHEBI:33019"/>
        <dbReference type="ChEBI" id="CHEBI:58053"/>
        <dbReference type="ChEBI" id="CHEBI:61402"/>
        <dbReference type="EC" id="3.6.1.66"/>
    </reaction>
</comment>
<comment type="cofactor">
    <cofactor evidence="1">
        <name>Mg(2+)</name>
        <dbReference type="ChEBI" id="CHEBI:18420"/>
    </cofactor>
    <text evidence="1">Binds 1 Mg(2+) ion per subunit.</text>
</comment>
<comment type="subunit">
    <text evidence="1">Homodimer.</text>
</comment>
<comment type="similarity">
    <text evidence="1">Belongs to the HAM1 NTPase family.</text>
</comment>
<gene>
    <name type="ordered locus">HI_0260</name>
</gene>